<name>MDTL_SALTI</name>
<evidence type="ECO:0000250" key="1"/>
<evidence type="ECO:0000255" key="2"/>
<evidence type="ECO:0000305" key="3"/>
<gene>
    <name type="primary">mdtL</name>
    <name type="ordered locus">STY3936</name>
    <name type="ordered locus">t3676</name>
</gene>
<comment type="subcellular location">
    <subcellularLocation>
        <location evidence="1">Cell inner membrane</location>
        <topology evidence="1">Multi-pass membrane protein</topology>
    </subcellularLocation>
</comment>
<comment type="similarity">
    <text evidence="3">Belongs to the major facilitator superfamily. DHA1 family. MdtL (TC 2.A.1.2.22) subfamily.</text>
</comment>
<sequence length="395" mass="41956">MKRFLLCSFALVLLYPAGIDMYLVGLPRIAADLNASEAQLHIAFSVYLAGMATAMLFAGKIADQSGRKPVAIVGAIVFMMASLLCSRASEGSLFLSGRFLQGVGAGGCYVVAFAILRDTLDEHRRAKVLSLLNGITCIVPVLAPVMGHLIMLRFPWQSLFYTMSTMGIMVGLLSLFILRETRPARLAPRDLSPSSSAAESLVNRFFVSRLAITTLSVSVILTFVNASPVLLMEVMGFSRGDYAITMALTAGVSMVVSFSTPFALGLFKPRTLMLVSQGLFLTAGVTLSLAHTNTVTLFGLTLICAGFSVGFGVAMSQALGPFSLRAGVASSTLGIAQVCGSSLWIWLAAILGISAMNMLIGILIGCSIVSILLIFSVAPNRSVAEHEEIPYQSRS</sequence>
<dbReference type="EMBL" id="AL513382">
    <property type="protein sequence ID" value="CAD03152.1"/>
    <property type="molecule type" value="Genomic_DNA"/>
</dbReference>
<dbReference type="EMBL" id="AE014613">
    <property type="protein sequence ID" value="AAO71172.1"/>
    <property type="molecule type" value="Genomic_DNA"/>
</dbReference>
<dbReference type="RefSeq" id="NP_458099.1">
    <property type="nucleotide sequence ID" value="NC_003198.1"/>
</dbReference>
<dbReference type="RefSeq" id="WP_000819608.1">
    <property type="nucleotide sequence ID" value="NZ_WSUR01000023.1"/>
</dbReference>
<dbReference type="SMR" id="Q8Z2N9"/>
<dbReference type="STRING" id="220341.gene:17587795"/>
<dbReference type="KEGG" id="stt:t3676"/>
<dbReference type="KEGG" id="sty:STY3936"/>
<dbReference type="PATRIC" id="fig|220341.7.peg.4016"/>
<dbReference type="eggNOG" id="COG2814">
    <property type="taxonomic scope" value="Bacteria"/>
</dbReference>
<dbReference type="HOGENOM" id="CLU_001265_47_1_6"/>
<dbReference type="OMA" id="SGIDMYL"/>
<dbReference type="OrthoDB" id="9814303at2"/>
<dbReference type="Proteomes" id="UP000000541">
    <property type="component" value="Chromosome"/>
</dbReference>
<dbReference type="Proteomes" id="UP000002670">
    <property type="component" value="Chromosome"/>
</dbReference>
<dbReference type="GO" id="GO:0005886">
    <property type="term" value="C:plasma membrane"/>
    <property type="evidence" value="ECO:0007669"/>
    <property type="project" value="UniProtKB-SubCell"/>
</dbReference>
<dbReference type="GO" id="GO:0022857">
    <property type="term" value="F:transmembrane transporter activity"/>
    <property type="evidence" value="ECO:0007669"/>
    <property type="project" value="UniProtKB-UniRule"/>
</dbReference>
<dbReference type="CDD" id="cd17320">
    <property type="entry name" value="MFS_MdfA_MDR_like"/>
    <property type="match status" value="1"/>
</dbReference>
<dbReference type="FunFam" id="1.20.1720.10:FF:000003">
    <property type="entry name" value="Multidrug resistance protein MdtL"/>
    <property type="match status" value="1"/>
</dbReference>
<dbReference type="Gene3D" id="1.20.1720.10">
    <property type="entry name" value="Multidrug resistance protein D"/>
    <property type="match status" value="1"/>
</dbReference>
<dbReference type="HAMAP" id="MF_01530">
    <property type="entry name" value="MFS_MdtL"/>
    <property type="match status" value="1"/>
</dbReference>
<dbReference type="InterPro" id="IPR011701">
    <property type="entry name" value="MFS"/>
</dbReference>
<dbReference type="InterPro" id="IPR020846">
    <property type="entry name" value="MFS_dom"/>
</dbReference>
<dbReference type="InterPro" id="IPR036259">
    <property type="entry name" value="MFS_trans_sf"/>
</dbReference>
<dbReference type="InterPro" id="IPR023697">
    <property type="entry name" value="Multidrug-R_MdtL"/>
</dbReference>
<dbReference type="NCBIfam" id="NF007782">
    <property type="entry name" value="PRK10473.1"/>
    <property type="match status" value="1"/>
</dbReference>
<dbReference type="PANTHER" id="PTHR42718">
    <property type="entry name" value="MAJOR FACILITATOR SUPERFAMILY MULTIDRUG TRANSPORTER MFSC"/>
    <property type="match status" value="1"/>
</dbReference>
<dbReference type="PANTHER" id="PTHR42718:SF9">
    <property type="entry name" value="MAJOR FACILITATOR SUPERFAMILY MULTIDRUG TRANSPORTER MFSC"/>
    <property type="match status" value="1"/>
</dbReference>
<dbReference type="Pfam" id="PF07690">
    <property type="entry name" value="MFS_1"/>
    <property type="match status" value="1"/>
</dbReference>
<dbReference type="SUPFAM" id="SSF103473">
    <property type="entry name" value="MFS general substrate transporter"/>
    <property type="match status" value="1"/>
</dbReference>
<dbReference type="PROSITE" id="PS50850">
    <property type="entry name" value="MFS"/>
    <property type="match status" value="1"/>
</dbReference>
<accession>Q8Z2N9</accession>
<accession>Q7C6H4</accession>
<proteinExistence type="inferred from homology"/>
<keyword id="KW-0997">Cell inner membrane</keyword>
<keyword id="KW-1003">Cell membrane</keyword>
<keyword id="KW-0472">Membrane</keyword>
<keyword id="KW-0812">Transmembrane</keyword>
<keyword id="KW-1133">Transmembrane helix</keyword>
<keyword id="KW-0813">Transport</keyword>
<feature type="chain" id="PRO_0000173359" description="Multidrug resistance protein MdtL">
    <location>
        <begin position="1"/>
        <end position="395"/>
    </location>
</feature>
<feature type="topological domain" description="Cytoplasmic" evidence="2">
    <location>
        <begin position="1"/>
        <end position="3"/>
    </location>
</feature>
<feature type="transmembrane region" description="Helical" evidence="2">
    <location>
        <begin position="4"/>
        <end position="24"/>
    </location>
</feature>
<feature type="topological domain" description="Periplasmic" evidence="2">
    <location>
        <begin position="25"/>
        <end position="41"/>
    </location>
</feature>
<feature type="transmembrane region" description="Helical" evidence="2">
    <location>
        <begin position="42"/>
        <end position="62"/>
    </location>
</feature>
<feature type="topological domain" description="Cytoplasmic" evidence="2">
    <location>
        <begin position="63"/>
        <end position="68"/>
    </location>
</feature>
<feature type="transmembrane region" description="Helical" evidence="2">
    <location>
        <begin position="69"/>
        <end position="89"/>
    </location>
</feature>
<feature type="topological domain" description="Periplasmic" evidence="2">
    <location>
        <begin position="90"/>
        <end position="92"/>
    </location>
</feature>
<feature type="transmembrane region" description="Helical" evidence="2">
    <location>
        <begin position="93"/>
        <end position="113"/>
    </location>
</feature>
<feature type="topological domain" description="Cytoplasmic" evidence="2">
    <location>
        <begin position="114"/>
        <end position="130"/>
    </location>
</feature>
<feature type="transmembrane region" description="Helical" evidence="2">
    <location>
        <begin position="131"/>
        <end position="151"/>
    </location>
</feature>
<feature type="topological domain" description="Periplasmic" evidence="2">
    <location>
        <begin position="152"/>
        <end position="157"/>
    </location>
</feature>
<feature type="transmembrane region" description="Helical" evidence="2">
    <location>
        <begin position="158"/>
        <end position="178"/>
    </location>
</feature>
<feature type="topological domain" description="Cytoplasmic" evidence="2">
    <location>
        <begin position="179"/>
        <end position="216"/>
    </location>
</feature>
<feature type="transmembrane region" description="Helical" evidence="2">
    <location>
        <begin position="217"/>
        <end position="237"/>
    </location>
</feature>
<feature type="topological domain" description="Periplasmic" evidence="2">
    <location>
        <begin position="238"/>
        <end position="246"/>
    </location>
</feature>
<feature type="transmembrane region" description="Helical" evidence="2">
    <location>
        <begin position="247"/>
        <end position="267"/>
    </location>
</feature>
<feature type="topological domain" description="Cytoplasmic" evidence="2">
    <location>
        <begin position="268"/>
        <end position="270"/>
    </location>
</feature>
<feature type="transmembrane region" description="Helical" evidence="2">
    <location>
        <begin position="271"/>
        <end position="291"/>
    </location>
</feature>
<feature type="topological domain" description="Periplasmic" evidence="2">
    <location>
        <begin position="292"/>
        <end position="294"/>
    </location>
</feature>
<feature type="transmembrane region" description="Helical" evidence="2">
    <location>
        <begin position="295"/>
        <end position="315"/>
    </location>
</feature>
<feature type="topological domain" description="Cytoplasmic" evidence="2">
    <location>
        <begin position="316"/>
        <end position="332"/>
    </location>
</feature>
<feature type="transmembrane region" description="Helical" evidence="2">
    <location>
        <begin position="333"/>
        <end position="353"/>
    </location>
</feature>
<feature type="topological domain" description="Periplasmic" evidence="2">
    <location>
        <begin position="354"/>
        <end position="357"/>
    </location>
</feature>
<feature type="transmembrane region" description="Helical" evidence="2">
    <location>
        <begin position="358"/>
        <end position="378"/>
    </location>
</feature>
<feature type="topological domain" description="Cytoplasmic" evidence="2">
    <location>
        <begin position="379"/>
        <end position="395"/>
    </location>
</feature>
<reference key="1">
    <citation type="journal article" date="2001" name="Nature">
        <title>Complete genome sequence of a multiple drug resistant Salmonella enterica serovar Typhi CT18.</title>
        <authorList>
            <person name="Parkhill J."/>
            <person name="Dougan G."/>
            <person name="James K.D."/>
            <person name="Thomson N.R."/>
            <person name="Pickard D."/>
            <person name="Wain J."/>
            <person name="Churcher C.M."/>
            <person name="Mungall K.L."/>
            <person name="Bentley S.D."/>
            <person name="Holden M.T.G."/>
            <person name="Sebaihia M."/>
            <person name="Baker S."/>
            <person name="Basham D."/>
            <person name="Brooks K."/>
            <person name="Chillingworth T."/>
            <person name="Connerton P."/>
            <person name="Cronin A."/>
            <person name="Davis P."/>
            <person name="Davies R.M."/>
            <person name="Dowd L."/>
            <person name="White N."/>
            <person name="Farrar J."/>
            <person name="Feltwell T."/>
            <person name="Hamlin N."/>
            <person name="Haque A."/>
            <person name="Hien T.T."/>
            <person name="Holroyd S."/>
            <person name="Jagels K."/>
            <person name="Krogh A."/>
            <person name="Larsen T.S."/>
            <person name="Leather S."/>
            <person name="Moule S."/>
            <person name="O'Gaora P."/>
            <person name="Parry C."/>
            <person name="Quail M.A."/>
            <person name="Rutherford K.M."/>
            <person name="Simmonds M."/>
            <person name="Skelton J."/>
            <person name="Stevens K."/>
            <person name="Whitehead S."/>
            <person name="Barrell B.G."/>
        </authorList>
    </citation>
    <scope>NUCLEOTIDE SEQUENCE [LARGE SCALE GENOMIC DNA]</scope>
    <source>
        <strain>CT18</strain>
    </source>
</reference>
<reference key="2">
    <citation type="journal article" date="2003" name="J. Bacteriol.">
        <title>Comparative genomics of Salmonella enterica serovar Typhi strains Ty2 and CT18.</title>
        <authorList>
            <person name="Deng W."/>
            <person name="Liou S.-R."/>
            <person name="Plunkett G. III"/>
            <person name="Mayhew G.F."/>
            <person name="Rose D.J."/>
            <person name="Burland V."/>
            <person name="Kodoyianni V."/>
            <person name="Schwartz D.C."/>
            <person name="Blattner F.R."/>
        </authorList>
    </citation>
    <scope>NUCLEOTIDE SEQUENCE [LARGE SCALE GENOMIC DNA]</scope>
    <source>
        <strain>ATCC 700931 / Ty2</strain>
    </source>
</reference>
<protein>
    <recommendedName>
        <fullName>Multidrug resistance protein MdtL</fullName>
    </recommendedName>
</protein>
<organism>
    <name type="scientific">Salmonella typhi</name>
    <dbReference type="NCBI Taxonomy" id="90370"/>
    <lineage>
        <taxon>Bacteria</taxon>
        <taxon>Pseudomonadati</taxon>
        <taxon>Pseudomonadota</taxon>
        <taxon>Gammaproteobacteria</taxon>
        <taxon>Enterobacterales</taxon>
        <taxon>Enterobacteriaceae</taxon>
        <taxon>Salmonella</taxon>
    </lineage>
</organism>